<reference key="1">
    <citation type="journal article" date="2012" name="Exp. Cell Res.">
        <title>CNK3 and IPCEF1 produce a single protein that is required for HGF dependent Arf6 activation and migration.</title>
        <authorList>
            <person name="Attar M.A."/>
            <person name="Salem J.C."/>
            <person name="Pursel H.S."/>
            <person name="Santy L.C."/>
        </authorList>
    </citation>
    <scope>NUCLEOTIDE SEQUENCE [MRNA] (ISOFORMS CNK3-IPCEF1-1; CNK3-IPCEF1-2 AND CNK3-IPCEF1-3)</scope>
    <scope>FUNCTION</scope>
</reference>
<reference key="2">
    <citation type="journal article" date="2003" name="Nature">
        <title>The DNA sequence and analysis of human chromosome 6.</title>
        <authorList>
            <person name="Mungall A.J."/>
            <person name="Palmer S.A."/>
            <person name="Sims S.K."/>
            <person name="Edwards C.A."/>
            <person name="Ashurst J.L."/>
            <person name="Wilming L."/>
            <person name="Jones M.C."/>
            <person name="Horton R."/>
            <person name="Hunt S.E."/>
            <person name="Scott C.E."/>
            <person name="Gilbert J.G.R."/>
            <person name="Clamp M.E."/>
            <person name="Bethel G."/>
            <person name="Milne S."/>
            <person name="Ainscough R."/>
            <person name="Almeida J.P."/>
            <person name="Ambrose K.D."/>
            <person name="Andrews T.D."/>
            <person name="Ashwell R.I.S."/>
            <person name="Babbage A.K."/>
            <person name="Bagguley C.L."/>
            <person name="Bailey J."/>
            <person name="Banerjee R."/>
            <person name="Barker D.J."/>
            <person name="Barlow K.F."/>
            <person name="Bates K."/>
            <person name="Beare D.M."/>
            <person name="Beasley H."/>
            <person name="Beasley O."/>
            <person name="Bird C.P."/>
            <person name="Blakey S.E."/>
            <person name="Bray-Allen S."/>
            <person name="Brook J."/>
            <person name="Brown A.J."/>
            <person name="Brown J.Y."/>
            <person name="Burford D.C."/>
            <person name="Burrill W."/>
            <person name="Burton J."/>
            <person name="Carder C."/>
            <person name="Carter N.P."/>
            <person name="Chapman J.C."/>
            <person name="Clark S.Y."/>
            <person name="Clark G."/>
            <person name="Clee C.M."/>
            <person name="Clegg S."/>
            <person name="Cobley V."/>
            <person name="Collier R.E."/>
            <person name="Collins J.E."/>
            <person name="Colman L.K."/>
            <person name="Corby N.R."/>
            <person name="Coville G.J."/>
            <person name="Culley K.M."/>
            <person name="Dhami P."/>
            <person name="Davies J."/>
            <person name="Dunn M."/>
            <person name="Earthrowl M.E."/>
            <person name="Ellington A.E."/>
            <person name="Evans K.A."/>
            <person name="Faulkner L."/>
            <person name="Francis M.D."/>
            <person name="Frankish A."/>
            <person name="Frankland J."/>
            <person name="French L."/>
            <person name="Garner P."/>
            <person name="Garnett J."/>
            <person name="Ghori M.J."/>
            <person name="Gilby L.M."/>
            <person name="Gillson C.J."/>
            <person name="Glithero R.J."/>
            <person name="Grafham D.V."/>
            <person name="Grant M."/>
            <person name="Gribble S."/>
            <person name="Griffiths C."/>
            <person name="Griffiths M.N.D."/>
            <person name="Hall R."/>
            <person name="Halls K.S."/>
            <person name="Hammond S."/>
            <person name="Harley J.L."/>
            <person name="Hart E.A."/>
            <person name="Heath P.D."/>
            <person name="Heathcott R."/>
            <person name="Holmes S.J."/>
            <person name="Howden P.J."/>
            <person name="Howe K.L."/>
            <person name="Howell G.R."/>
            <person name="Huckle E."/>
            <person name="Humphray S.J."/>
            <person name="Humphries M.D."/>
            <person name="Hunt A.R."/>
            <person name="Johnson C.M."/>
            <person name="Joy A.A."/>
            <person name="Kay M."/>
            <person name="Keenan S.J."/>
            <person name="Kimberley A.M."/>
            <person name="King A."/>
            <person name="Laird G.K."/>
            <person name="Langford C."/>
            <person name="Lawlor S."/>
            <person name="Leongamornlert D.A."/>
            <person name="Leversha M."/>
            <person name="Lloyd C.R."/>
            <person name="Lloyd D.M."/>
            <person name="Loveland J.E."/>
            <person name="Lovell J."/>
            <person name="Martin S."/>
            <person name="Mashreghi-Mohammadi M."/>
            <person name="Maslen G.L."/>
            <person name="Matthews L."/>
            <person name="McCann O.T."/>
            <person name="McLaren S.J."/>
            <person name="McLay K."/>
            <person name="McMurray A."/>
            <person name="Moore M.J.F."/>
            <person name="Mullikin J.C."/>
            <person name="Niblett D."/>
            <person name="Nickerson T."/>
            <person name="Novik K.L."/>
            <person name="Oliver K."/>
            <person name="Overton-Larty E.K."/>
            <person name="Parker A."/>
            <person name="Patel R."/>
            <person name="Pearce A.V."/>
            <person name="Peck A.I."/>
            <person name="Phillimore B.J.C.T."/>
            <person name="Phillips S."/>
            <person name="Plumb R.W."/>
            <person name="Porter K.M."/>
            <person name="Ramsey Y."/>
            <person name="Ranby S.A."/>
            <person name="Rice C.M."/>
            <person name="Ross M.T."/>
            <person name="Searle S.M."/>
            <person name="Sehra H.K."/>
            <person name="Sheridan E."/>
            <person name="Skuce C.D."/>
            <person name="Smith S."/>
            <person name="Smith M."/>
            <person name="Spraggon L."/>
            <person name="Squares S.L."/>
            <person name="Steward C.A."/>
            <person name="Sycamore N."/>
            <person name="Tamlyn-Hall G."/>
            <person name="Tester J."/>
            <person name="Theaker A.J."/>
            <person name="Thomas D.W."/>
            <person name="Thorpe A."/>
            <person name="Tracey A."/>
            <person name="Tromans A."/>
            <person name="Tubby B."/>
            <person name="Wall M."/>
            <person name="Wallis J.M."/>
            <person name="West A.P."/>
            <person name="White S.S."/>
            <person name="Whitehead S.L."/>
            <person name="Whittaker H."/>
            <person name="Wild A."/>
            <person name="Willey D.J."/>
            <person name="Wilmer T.E."/>
            <person name="Wood J.M."/>
            <person name="Wray P.W."/>
            <person name="Wyatt J.C."/>
            <person name="Young L."/>
            <person name="Younger R.M."/>
            <person name="Bentley D.R."/>
            <person name="Coulson A."/>
            <person name="Durbin R.M."/>
            <person name="Hubbard T."/>
            <person name="Sulston J.E."/>
            <person name="Dunham I."/>
            <person name="Rogers J."/>
            <person name="Beck S."/>
        </authorList>
    </citation>
    <scope>NUCLEOTIDE SEQUENCE [LARGE SCALE GENOMIC DNA]</scope>
</reference>
<reference key="3">
    <citation type="journal article" date="2009" name="Anal. Chem.">
        <title>Lys-N and trypsin cover complementary parts of the phosphoproteome in a refined SCX-based approach.</title>
        <authorList>
            <person name="Gauci S."/>
            <person name="Helbig A.O."/>
            <person name="Slijper M."/>
            <person name="Krijgsveld J."/>
            <person name="Heck A.J."/>
            <person name="Mohammed S."/>
        </authorList>
    </citation>
    <scope>IDENTIFICATION BY MASS SPECTROMETRY [LARGE SCALE ANALYSIS]</scope>
</reference>
<reference key="4">
    <citation type="journal article" date="2013" name="J. Proteome Res.">
        <title>Toward a comprehensive characterization of a human cancer cell phosphoproteome.</title>
        <authorList>
            <person name="Zhou H."/>
            <person name="Di Palma S."/>
            <person name="Preisinger C."/>
            <person name="Peng M."/>
            <person name="Polat A.N."/>
            <person name="Heck A.J."/>
            <person name="Mohammed S."/>
        </authorList>
    </citation>
    <scope>PHOSPHORYLATION [LARGE SCALE ANALYSIS] AT SER-383</scope>
    <scope>IDENTIFICATION BY MASS SPECTROMETRY [LARGE SCALE ANALYSIS]</scope>
    <source>
        <tissue>Cervix carcinoma</tissue>
        <tissue>Erythroleukemia</tissue>
    </source>
</reference>
<reference key="5">
    <citation type="journal article" date="2014" name="J. Proteomics">
        <title>An enzyme assisted RP-RPLC approach for in-depth analysis of human liver phosphoproteome.</title>
        <authorList>
            <person name="Bian Y."/>
            <person name="Song C."/>
            <person name="Cheng K."/>
            <person name="Dong M."/>
            <person name="Wang F."/>
            <person name="Huang J."/>
            <person name="Sun D."/>
            <person name="Wang L."/>
            <person name="Ye M."/>
            <person name="Zou H."/>
        </authorList>
    </citation>
    <scope>PHOSPHORYLATION [LARGE SCALE ANALYSIS] AT SER-873</scope>
    <scope>IDENTIFICATION BY MASS SPECTROMETRY [LARGE SCALE ANALYSIS]</scope>
    <source>
        <tissue>Liver</tissue>
    </source>
</reference>
<accession>G9CGD6</accession>
<accession>G9CGD3</accession>
<accession>G9CGD4</accession>
<sequence length="899" mass="100365">MEPVTKWSPKQVVDWTRGLDDCLQQYVHKFEREKINGEQLLQISHQDLEELGVTRIGHQELVLEAVDLLCALNYGLETDNMKNLVLKLRASSHNLQNYISSRRKSPAYDGNTSRKAPNEFLTSVVELIGAAKALLAWLDRAPFTGITDFSVTKNKIIQLCLDLTTTVQKDCFVAEMEDKVLTVVKVLNGICDKTIRSTTDPVMSQCACLEEVHLPNIKPGEGLGMYIKSTYDGLHVITGTTENSPADRSQKIHAGDEVIQVNQQTVVGWQLKNLVKKLRENPTGVVLLLKKRPTGSFNFTPAPLKNLRWKPPLVQTSPPPATTQSPESTMDTSLKKEKSAILDLYIPPPPAVPYSPRDENGSFVYGGSSKCKQPLPGPKGSESPNSFLDQESRRRRFTIADSDQLPGYSVETNILPTKMREKTPSYGKPRPLSMPADGNWMGIVDPFARPRGHGRKAFVSTKMTSYMAIDGSALVPLRQKPRRKTQGFLTMSRRRISCKDLGHADCQGWLYKKKEKGSFLSNKWKKFWVILKGSSLYWYSNQMAEKADGFVNLPDFTVERASECKKKHAFKISHPQIKTFYFAAENVQEMNVWLNKLGSAVIHQESTTKDEECYSESEQEDPEIAAETPPPPHASQTQSLTAQQASSSSPSLSGTSYSFSSLENTVKTPSSFPSSLSKERQSLPDTVNSLSAAEDEGQPITFAVQVHSPVPSEAGIHKALENSFVTSESGFLNSLSSDDTSSLSSNHDHLTVPDKPAGSKIMDKEETKVSEDDEMEKLYKSLEQASLSPLGDRRPSTKKELRKSFVKRCKNPSINEKLHKIRTLNSTLKCKEHDLAMINQLLDDPKLTARKYREWKVMNTLLIQDIYQQQRASPAPDDTDDTPQELKKSPSSPSVENSI</sequence>
<keyword id="KW-0025">Alternative splicing</keyword>
<keyword id="KW-0597">Phosphoprotein</keyword>
<keyword id="KW-1185">Reference proteome</keyword>
<protein>
    <recommendedName>
        <fullName evidence="9">CNK3/IPCEF1 fusion protein</fullName>
    </recommendedName>
</protein>
<name>CNIPF_HUMAN</name>
<organism>
    <name type="scientific">Homo sapiens</name>
    <name type="common">Human</name>
    <dbReference type="NCBI Taxonomy" id="9606"/>
    <lineage>
        <taxon>Eukaryota</taxon>
        <taxon>Metazoa</taxon>
        <taxon>Chordata</taxon>
        <taxon>Craniata</taxon>
        <taxon>Vertebrata</taxon>
        <taxon>Euteleostomi</taxon>
        <taxon>Mammalia</taxon>
        <taxon>Eutheria</taxon>
        <taxon>Euarchontoglires</taxon>
        <taxon>Primates</taxon>
        <taxon>Haplorrhini</taxon>
        <taxon>Catarrhini</taxon>
        <taxon>Hominidae</taxon>
        <taxon>Homo</taxon>
    </lineage>
</organism>
<comment type="function">
    <text evidence="8">Required for hepatocyte growth factor (HGF)-dependent activation of Arf6 and HGF-stimulated cell migration.</text>
</comment>
<comment type="alternative products">
    <event type="alternative splicing"/>
    <isoform>
        <id>G9CGD6-1</id>
        <name>CNK3-IPCEF1-1</name>
        <name>CNK3/IPCEF1 Long-1</name>
        <sequence type="displayed"/>
    </isoform>
    <isoform>
        <id>G9CGD6-2</id>
        <name>CNK3-IPCEF1-2</name>
        <name>CNK3/IPCEF1 Long-2</name>
        <sequence type="described" ref="VSP_059280"/>
    </isoform>
    <isoform>
        <id>G9CGD6-3</id>
        <name>CNK3-IPCEF1-3</name>
        <name>CNK3/IPCEF1 Short</name>
        <sequence type="described" ref="VSP_059281"/>
    </isoform>
    <isoform>
        <id>Q6P9H4-1</id>
        <name>CNK3</name>
        <sequence type="external"/>
    </isoform>
    <isoform>
        <id>Q8WWN9-1</id>
        <name>IPCEF1-1</name>
        <sequence type="external"/>
    </isoform>
    <isoform>
        <id>Q8WWN9-2</id>
        <name>IPCEF1-2</name>
        <sequence type="external"/>
    </isoform>
</comment>
<comment type="miscellaneous">
    <molecule>Isoform CNK3-IPCEF1-1</molecule>
    <text evidence="8">Based on a naturally occurring readthrough transcript which produces an CNK3/IPCEF1 fusion protein.</text>
</comment>
<comment type="miscellaneous">
    <molecule>Isoform CNK3-IPCEF1-2</molecule>
    <text evidence="8">Based on a naturally occurring readthrough transcript which produces an CNK3/IPCEF1 fusion protein.</text>
</comment>
<comment type="miscellaneous">
    <molecule>Isoform CNK3-IPCEF1-3</molecule>
    <text evidence="8">Based on a naturally occurring readthrough transcript which produces an CNK3/IPCEF1 fusion protein. Major isoform found in CaCo2-cells.</text>
</comment>
<comment type="similarity">
    <text evidence="10">Belongs to the CNKSR family.</text>
</comment>
<gene>
    <name type="primary">CNK3/IPCEF1</name>
</gene>
<dbReference type="EMBL" id="JF308526">
    <property type="protein sequence ID" value="AEA29623.1"/>
    <property type="molecule type" value="mRNA"/>
</dbReference>
<dbReference type="EMBL" id="JF308523">
    <property type="protein sequence ID" value="AEA29620.1"/>
    <property type="molecule type" value="mRNA"/>
</dbReference>
<dbReference type="EMBL" id="JF308524">
    <property type="protein sequence ID" value="AEA29621.1"/>
    <property type="molecule type" value="mRNA"/>
</dbReference>
<dbReference type="EMBL" id="AL033376">
    <property type="status" value="NOT_ANNOTATED_CDS"/>
    <property type="molecule type" value="Genomic_DNA"/>
</dbReference>
<dbReference type="EMBL" id="AL132774">
    <property type="status" value="NOT_ANNOTATED_CDS"/>
    <property type="molecule type" value="Genomic_DNA"/>
</dbReference>
<dbReference type="EMBL" id="AL357075">
    <property type="status" value="NOT_ANNOTATED_CDS"/>
    <property type="molecule type" value="Genomic_DNA"/>
</dbReference>
<dbReference type="EMBL" id="AL445220">
    <property type="status" value="NOT_ANNOTATED_CDS"/>
    <property type="molecule type" value="Genomic_DNA"/>
</dbReference>
<dbReference type="EMBL" id="AL590401">
    <property type="status" value="NOT_ANNOTATED_CDS"/>
    <property type="molecule type" value="Genomic_DNA"/>
</dbReference>
<dbReference type="EMBL" id="KF510943">
    <property type="status" value="NOT_ANNOTATED_CDS"/>
    <property type="molecule type" value="Genomic_DNA"/>
</dbReference>
<dbReference type="SMR" id="G9CGD6"/>
<dbReference type="FunCoup" id="G9CGD6">
    <property type="interactions" value="89"/>
</dbReference>
<dbReference type="IntAct" id="G9CGD6">
    <property type="interactions" value="2"/>
</dbReference>
<dbReference type="STRING" id="9606.ENSP00000499846"/>
<dbReference type="iPTMnet" id="G9CGD6"/>
<dbReference type="PhosphoSitePlus" id="G9CGD6"/>
<dbReference type="jPOST" id="G9CGD6"/>
<dbReference type="MassIVE" id="G9CGD6"/>
<dbReference type="Pumba" id="G9CGD6"/>
<dbReference type="UCSC" id="uc021zhc.2">
    <molecule id="G9CGD6-1"/>
    <property type="organism name" value="human"/>
</dbReference>
<dbReference type="HPA" id="ENSG00000288520">
    <property type="expression patterns" value="Low tissue specificity"/>
</dbReference>
<dbReference type="neXtProt" id="NX_G9CGD6"/>
<dbReference type="VEuPathDB" id="HostDB:ENSG00000288520"/>
<dbReference type="HOGENOM" id="CLU_013414_0_0_1"/>
<dbReference type="InParanoid" id="G9CGD6"/>
<dbReference type="OMA" id="YEPTESH"/>
<dbReference type="PAN-GO" id="G9CGD6">
    <property type="GO annotations" value="0 GO annotations based on evolutionary models"/>
</dbReference>
<dbReference type="Pharos" id="G9CGD6">
    <property type="development level" value="Tbio"/>
</dbReference>
<dbReference type="Proteomes" id="UP000005640">
    <property type="component" value="Unplaced"/>
</dbReference>
<dbReference type="GO" id="GO:0005737">
    <property type="term" value="C:cytoplasm"/>
    <property type="evidence" value="ECO:0007669"/>
    <property type="project" value="InterPro"/>
</dbReference>
<dbReference type="GO" id="GO:0016020">
    <property type="term" value="C:membrane"/>
    <property type="evidence" value="ECO:0007669"/>
    <property type="project" value="InterPro"/>
</dbReference>
<dbReference type="GO" id="GO:2001114">
    <property type="term" value="P:positive regulation of cellular response to hepatocyte growth factor stimulus"/>
    <property type="evidence" value="ECO:0000315"/>
    <property type="project" value="UniProtKB"/>
</dbReference>
<dbReference type="GO" id="GO:0009966">
    <property type="term" value="P:regulation of signal transduction"/>
    <property type="evidence" value="ECO:0007669"/>
    <property type="project" value="InterPro"/>
</dbReference>
<dbReference type="CDD" id="cd06748">
    <property type="entry name" value="PDZ_CNK1_2_3-like"/>
    <property type="match status" value="1"/>
</dbReference>
<dbReference type="CDD" id="cd01260">
    <property type="entry name" value="PH_CNK_mammalian-like"/>
    <property type="match status" value="1"/>
</dbReference>
<dbReference type="CDD" id="cd09511">
    <property type="entry name" value="SAM_CNK1_2_3-suppressor"/>
    <property type="match status" value="1"/>
</dbReference>
<dbReference type="FunFam" id="1.10.150.50:FF:000019">
    <property type="entry name" value="Connector enhancer of kinase suppressor of Ras 2"/>
    <property type="match status" value="1"/>
</dbReference>
<dbReference type="FunFam" id="2.30.29.30:FF:000092">
    <property type="entry name" value="Connector enhancer of kinase suppressor of Ras 2"/>
    <property type="match status" value="1"/>
</dbReference>
<dbReference type="FunFam" id="2.30.42.10:FF:000060">
    <property type="entry name" value="Connector enhancer of kinase suppressor of Ras 2"/>
    <property type="match status" value="1"/>
</dbReference>
<dbReference type="Gene3D" id="2.30.42.10">
    <property type="match status" value="1"/>
</dbReference>
<dbReference type="Gene3D" id="2.30.29.30">
    <property type="entry name" value="Pleckstrin-homology domain (PH domain)/Phosphotyrosine-binding domain (PTB)"/>
    <property type="match status" value="1"/>
</dbReference>
<dbReference type="Gene3D" id="1.10.150.50">
    <property type="entry name" value="Transcription Factor, Ets-1"/>
    <property type="match status" value="1"/>
</dbReference>
<dbReference type="InterPro" id="IPR049628">
    <property type="entry name" value="CNK1-3_SAM"/>
</dbReference>
<dbReference type="InterPro" id="IPR010599">
    <property type="entry name" value="CNK2/3_dom"/>
</dbReference>
<dbReference type="InterPro" id="IPR051566">
    <property type="entry name" value="CNKSR"/>
</dbReference>
<dbReference type="InterPro" id="IPR017874">
    <property type="entry name" value="CRIC_domain"/>
</dbReference>
<dbReference type="InterPro" id="IPR001478">
    <property type="entry name" value="PDZ"/>
</dbReference>
<dbReference type="InterPro" id="IPR036034">
    <property type="entry name" value="PDZ_sf"/>
</dbReference>
<dbReference type="InterPro" id="IPR011993">
    <property type="entry name" value="PH-like_dom_sf"/>
</dbReference>
<dbReference type="InterPro" id="IPR001849">
    <property type="entry name" value="PH_domain"/>
</dbReference>
<dbReference type="InterPro" id="IPR001660">
    <property type="entry name" value="SAM"/>
</dbReference>
<dbReference type="InterPro" id="IPR013761">
    <property type="entry name" value="SAM/pointed_sf"/>
</dbReference>
<dbReference type="PANTHER" id="PTHR12844:SF45">
    <property type="entry name" value="CNK3_IPCEF1 FUSION PROTEIN-RELATED"/>
    <property type="match status" value="1"/>
</dbReference>
<dbReference type="PANTHER" id="PTHR12844">
    <property type="entry name" value="CONNECTOR ENCHANCER OF KINASE SUPPRESSOR OF RAS"/>
    <property type="match status" value="1"/>
</dbReference>
<dbReference type="Pfam" id="PF06663">
    <property type="entry name" value="CNK2_3_dom"/>
    <property type="match status" value="1"/>
</dbReference>
<dbReference type="Pfam" id="PF10534">
    <property type="entry name" value="CRIC_ras_sig"/>
    <property type="match status" value="1"/>
</dbReference>
<dbReference type="Pfam" id="PF00595">
    <property type="entry name" value="PDZ"/>
    <property type="match status" value="1"/>
</dbReference>
<dbReference type="Pfam" id="PF00169">
    <property type="entry name" value="PH"/>
    <property type="match status" value="1"/>
</dbReference>
<dbReference type="Pfam" id="PF00536">
    <property type="entry name" value="SAM_1"/>
    <property type="match status" value="1"/>
</dbReference>
<dbReference type="SMART" id="SM00228">
    <property type="entry name" value="PDZ"/>
    <property type="match status" value="1"/>
</dbReference>
<dbReference type="SMART" id="SM00233">
    <property type="entry name" value="PH"/>
    <property type="match status" value="1"/>
</dbReference>
<dbReference type="SMART" id="SM00454">
    <property type="entry name" value="SAM"/>
    <property type="match status" value="1"/>
</dbReference>
<dbReference type="SUPFAM" id="SSF50156">
    <property type="entry name" value="PDZ domain-like"/>
    <property type="match status" value="1"/>
</dbReference>
<dbReference type="SUPFAM" id="SSF50729">
    <property type="entry name" value="PH domain-like"/>
    <property type="match status" value="1"/>
</dbReference>
<dbReference type="SUPFAM" id="SSF47769">
    <property type="entry name" value="SAM/Pointed domain"/>
    <property type="match status" value="1"/>
</dbReference>
<dbReference type="PROSITE" id="PS51290">
    <property type="entry name" value="CRIC"/>
    <property type="match status" value="1"/>
</dbReference>
<dbReference type="PROSITE" id="PS50106">
    <property type="entry name" value="PDZ"/>
    <property type="match status" value="1"/>
</dbReference>
<dbReference type="PROSITE" id="PS50003">
    <property type="entry name" value="PH_DOMAIN"/>
    <property type="match status" value="1"/>
</dbReference>
<dbReference type="PROSITE" id="PS50105">
    <property type="entry name" value="SAM_DOMAIN"/>
    <property type="match status" value="1"/>
</dbReference>
<proteinExistence type="evidence at protein level"/>
<feature type="chain" id="PRO_0000442776" description="CNK3/IPCEF1 fusion protein">
    <location>
        <begin position="1"/>
        <end position="899"/>
    </location>
</feature>
<feature type="domain" description="SAM" evidence="5">
    <location>
        <begin position="7"/>
        <end position="72"/>
    </location>
</feature>
<feature type="domain" description="CRIC" evidence="6">
    <location>
        <begin position="80"/>
        <end position="174"/>
    </location>
</feature>
<feature type="domain" description="PDZ" evidence="3">
    <location>
        <begin position="211"/>
        <end position="293"/>
    </location>
</feature>
<feature type="domain" description="DUF1170" evidence="2">
    <location>
        <begin position="332"/>
        <end position="457"/>
    </location>
</feature>
<feature type="domain" description="PH" evidence="4">
    <location>
        <begin position="503"/>
        <end position="602"/>
    </location>
</feature>
<feature type="region of interest" description="Disordered" evidence="7">
    <location>
        <begin position="309"/>
        <end position="334"/>
    </location>
</feature>
<feature type="region of interest" description="Disordered" evidence="7">
    <location>
        <begin position="347"/>
        <end position="390"/>
    </location>
</feature>
<feature type="region of interest" description="Disordered" evidence="7">
    <location>
        <begin position="605"/>
        <end position="687"/>
    </location>
</feature>
<feature type="region of interest" description="Disordered" evidence="7">
    <location>
        <begin position="735"/>
        <end position="770"/>
    </location>
</feature>
<feature type="region of interest" description="Required for interaction with CYTH2" evidence="1">
    <location>
        <begin position="851"/>
        <end position="899"/>
    </location>
</feature>
<feature type="region of interest" description="Disordered" evidence="7">
    <location>
        <begin position="868"/>
        <end position="899"/>
    </location>
</feature>
<feature type="compositionally biased region" description="Acidic residues" evidence="7">
    <location>
        <begin position="613"/>
        <end position="624"/>
    </location>
</feature>
<feature type="compositionally biased region" description="Low complexity" evidence="7">
    <location>
        <begin position="634"/>
        <end position="662"/>
    </location>
</feature>
<feature type="compositionally biased region" description="Polar residues" evidence="7">
    <location>
        <begin position="663"/>
        <end position="676"/>
    </location>
</feature>
<feature type="compositionally biased region" description="Low complexity" evidence="7">
    <location>
        <begin position="735"/>
        <end position="745"/>
    </location>
</feature>
<feature type="compositionally biased region" description="Basic and acidic residues" evidence="7">
    <location>
        <begin position="761"/>
        <end position="770"/>
    </location>
</feature>
<feature type="compositionally biased region" description="Polar residues" evidence="7">
    <location>
        <begin position="889"/>
        <end position="899"/>
    </location>
</feature>
<feature type="modified residue" description="Phosphoserine" evidence="11">
    <location>
        <position position="383"/>
    </location>
</feature>
<feature type="modified residue" description="Phosphoserine" evidence="12">
    <location>
        <position position="873"/>
    </location>
</feature>
<feature type="splice variant" id="VSP_059280" description="In isoform CNK3-IPCEF1-2.">
    <original>L</original>
    <variation>LQ</variation>
    <location>
        <position position="474"/>
    </location>
</feature>
<feature type="splice variant" id="VSP_059281" description="In isoform CNK3-IPCEF1-3.">
    <location>
        <begin position="475"/>
        <end position="543"/>
    </location>
</feature>
<feature type="sequence conflict" description="In Ref. 1; AEA29621." evidence="10" ref="1">
    <original>S</original>
    <variation>L</variation>
    <location>
        <position position="647"/>
    </location>
</feature>
<evidence type="ECO:0000250" key="1">
    <source>
        <dbReference type="UniProtKB" id="Q8WWN9"/>
    </source>
</evidence>
<evidence type="ECO:0000255" key="2"/>
<evidence type="ECO:0000255" key="3">
    <source>
        <dbReference type="PROSITE-ProRule" id="PRU00143"/>
    </source>
</evidence>
<evidence type="ECO:0000255" key="4">
    <source>
        <dbReference type="PROSITE-ProRule" id="PRU00145"/>
    </source>
</evidence>
<evidence type="ECO:0000255" key="5">
    <source>
        <dbReference type="PROSITE-ProRule" id="PRU00184"/>
    </source>
</evidence>
<evidence type="ECO:0000255" key="6">
    <source>
        <dbReference type="PROSITE-ProRule" id="PRU00621"/>
    </source>
</evidence>
<evidence type="ECO:0000256" key="7">
    <source>
        <dbReference type="SAM" id="MobiDB-lite"/>
    </source>
</evidence>
<evidence type="ECO:0000269" key="8">
    <source>
    </source>
</evidence>
<evidence type="ECO:0000303" key="9">
    <source>
    </source>
</evidence>
<evidence type="ECO:0000305" key="10"/>
<evidence type="ECO:0007744" key="11">
    <source>
    </source>
</evidence>
<evidence type="ECO:0007744" key="12">
    <source>
    </source>
</evidence>